<comment type="function">
    <text evidence="4 5 6 7 8 9">Deubiquitinase that plays a role in several cellular processes including transcriptional regulation, cell cycle progression or innate immunity. In response to DNA damage, deubiquitinates monoubiquitinated target proteins such as histone H2A and H2AX and thereby counteracts RNF168- and RNF8-mediated ubiquitination. In turn, participates in the recruitment of DNA damage repair factors to DNA break sites (PubMed:24196443). Required for proper progression through S phase and subsequent mitotic entry (PubMed:17980597). Acts as a positive regulator of TP53 by deubiquitinating and stabilizing it to promote normal cell proliferation and transformation (PubMed:28807825). Participates in establishing tolerance innate immune memory through non-transcriptional feedback. Mechanistically, negatively regulates TLR-induced NF-kappa-B signaling by targeting and removing the 'Lys-63'-linked polyubiquitin chains on MYD88 (PubMed:37971847). Negatively regulates the activation of type I interferon signaling by mediating 'Lys-63'-linked polyubiquitin chains on RIGI and IFIH1 (PubMed:24366338). Also deubiquinates ASC/PYCARD, the central adapter mediating the assembly and activation of most inflammasomes, and thereby promotes inflammasome activation (PubMed:36050480).</text>
</comment>
<comment type="catalytic activity">
    <reaction evidence="5 6 7 9">
        <text>Thiol-dependent hydrolysis of ester, thioester, amide, peptide and isopeptide bonds formed by the C-terminal Gly of ubiquitin (a 76-residue protein attached to proteins as an intracellular targeting signal).</text>
        <dbReference type="EC" id="3.4.19.12"/>
    </reaction>
</comment>
<comment type="subunit">
    <text evidence="4">Interacts (via UBP-type domain) with H2A; the interaction is less efficient than with monoubiquitinated H2A.</text>
</comment>
<comment type="subcellular location">
    <subcellularLocation>
        <location evidence="4 5 9">Nucleus</location>
    </subcellularLocation>
    <subcellularLocation>
        <location evidence="9">Cytoplasm</location>
    </subcellularLocation>
    <text evidence="4 9">Localizes preferentially with monoubiquitinated H2A to chromatin (PubMed:17980597). Upon NF-kappa-B signaling activation, exits the nucleus (PubMed:37971847).</text>
</comment>
<comment type="alternative products">
    <event type="alternative splicing"/>
    <isoform>
        <id>Q9Y6I4-1</id>
        <name>1</name>
        <sequence type="displayed"/>
    </isoform>
    <isoform>
        <id>Q9Y6I4-2</id>
        <name>2</name>
        <sequence type="described" ref="VSP_044712"/>
    </isoform>
</comment>
<comment type="tissue specificity">
    <text>Expressed in all tissues examined, with strongest expression in pancreas.</text>
</comment>
<comment type="domain">
    <text>Both protease activity and an intact zinc finger are required for H2A monodeubiquitination.</text>
</comment>
<comment type="similarity">
    <text evidence="11">Belongs to the peptidase C19 family. USP3 subfamily.</text>
</comment>
<comment type="sequence caution" evidence="11">
    <conflict type="frameshift">
        <sequence resource="EMBL-CDS" id="AAD42992"/>
    </conflict>
</comment>
<organism>
    <name type="scientific">Homo sapiens</name>
    <name type="common">Human</name>
    <dbReference type="NCBI Taxonomy" id="9606"/>
    <lineage>
        <taxon>Eukaryota</taxon>
        <taxon>Metazoa</taxon>
        <taxon>Chordata</taxon>
        <taxon>Craniata</taxon>
        <taxon>Vertebrata</taxon>
        <taxon>Euteleostomi</taxon>
        <taxon>Mammalia</taxon>
        <taxon>Eutheria</taxon>
        <taxon>Euarchontoglires</taxon>
        <taxon>Primates</taxon>
        <taxon>Haplorrhini</taxon>
        <taxon>Catarrhini</taxon>
        <taxon>Hominidae</taxon>
        <taxon>Homo</taxon>
    </lineage>
</organism>
<reference key="1">
    <citation type="journal article" date="1999" name="J. Biol. Chem.">
        <title>Characterization and chromosomal localization of USP3, a novel human ubiquitin-specific protease.</title>
        <authorList>
            <person name="Sloper-Mould K.E."/>
            <person name="Eyre H.J."/>
            <person name="Wang X.-W."/>
            <person name="Sutherland G.R."/>
            <person name="Baker R.T."/>
        </authorList>
    </citation>
    <scope>NUCLEOTIDE SEQUENCE [MRNA] (ISOFORM 1)</scope>
</reference>
<reference key="2">
    <citation type="submission" date="2003-05" db="EMBL/GenBank/DDBJ databases">
        <title>Cloning of human full-length CDSs in BD Creator(TM) system donor vector.</title>
        <authorList>
            <person name="Kalnine N."/>
            <person name="Chen X."/>
            <person name="Rolfs A."/>
            <person name="Halleck A."/>
            <person name="Hines L."/>
            <person name="Eisenstein S."/>
            <person name="Koundinya M."/>
            <person name="Raphael J."/>
            <person name="Moreira D."/>
            <person name="Kelley T."/>
            <person name="LaBaer J."/>
            <person name="Lin Y."/>
            <person name="Phelan M."/>
            <person name="Farmer A."/>
        </authorList>
    </citation>
    <scope>NUCLEOTIDE SEQUENCE [LARGE SCALE MRNA] (ISOFORM 1)</scope>
</reference>
<reference key="3">
    <citation type="journal article" date="2004" name="Nat. Genet.">
        <title>Complete sequencing and characterization of 21,243 full-length human cDNAs.</title>
        <authorList>
            <person name="Ota T."/>
            <person name="Suzuki Y."/>
            <person name="Nishikawa T."/>
            <person name="Otsuki T."/>
            <person name="Sugiyama T."/>
            <person name="Irie R."/>
            <person name="Wakamatsu A."/>
            <person name="Hayashi K."/>
            <person name="Sato H."/>
            <person name="Nagai K."/>
            <person name="Kimura K."/>
            <person name="Makita H."/>
            <person name="Sekine M."/>
            <person name="Obayashi M."/>
            <person name="Nishi T."/>
            <person name="Shibahara T."/>
            <person name="Tanaka T."/>
            <person name="Ishii S."/>
            <person name="Yamamoto J."/>
            <person name="Saito K."/>
            <person name="Kawai Y."/>
            <person name="Isono Y."/>
            <person name="Nakamura Y."/>
            <person name="Nagahari K."/>
            <person name="Murakami K."/>
            <person name="Yasuda T."/>
            <person name="Iwayanagi T."/>
            <person name="Wagatsuma M."/>
            <person name="Shiratori A."/>
            <person name="Sudo H."/>
            <person name="Hosoiri T."/>
            <person name="Kaku Y."/>
            <person name="Kodaira H."/>
            <person name="Kondo H."/>
            <person name="Sugawara M."/>
            <person name="Takahashi M."/>
            <person name="Kanda K."/>
            <person name="Yokoi T."/>
            <person name="Furuya T."/>
            <person name="Kikkawa E."/>
            <person name="Omura Y."/>
            <person name="Abe K."/>
            <person name="Kamihara K."/>
            <person name="Katsuta N."/>
            <person name="Sato K."/>
            <person name="Tanikawa M."/>
            <person name="Yamazaki M."/>
            <person name="Ninomiya K."/>
            <person name="Ishibashi T."/>
            <person name="Yamashita H."/>
            <person name="Murakawa K."/>
            <person name="Fujimori K."/>
            <person name="Tanai H."/>
            <person name="Kimata M."/>
            <person name="Watanabe M."/>
            <person name="Hiraoka S."/>
            <person name="Chiba Y."/>
            <person name="Ishida S."/>
            <person name="Ono Y."/>
            <person name="Takiguchi S."/>
            <person name="Watanabe S."/>
            <person name="Yosida M."/>
            <person name="Hotuta T."/>
            <person name="Kusano J."/>
            <person name="Kanehori K."/>
            <person name="Takahashi-Fujii A."/>
            <person name="Hara H."/>
            <person name="Tanase T.-O."/>
            <person name="Nomura Y."/>
            <person name="Togiya S."/>
            <person name="Komai F."/>
            <person name="Hara R."/>
            <person name="Takeuchi K."/>
            <person name="Arita M."/>
            <person name="Imose N."/>
            <person name="Musashino K."/>
            <person name="Yuuki H."/>
            <person name="Oshima A."/>
            <person name="Sasaki N."/>
            <person name="Aotsuka S."/>
            <person name="Yoshikawa Y."/>
            <person name="Matsunawa H."/>
            <person name="Ichihara T."/>
            <person name="Shiohata N."/>
            <person name="Sano S."/>
            <person name="Moriya S."/>
            <person name="Momiyama H."/>
            <person name="Satoh N."/>
            <person name="Takami S."/>
            <person name="Terashima Y."/>
            <person name="Suzuki O."/>
            <person name="Nakagawa S."/>
            <person name="Senoh A."/>
            <person name="Mizoguchi H."/>
            <person name="Goto Y."/>
            <person name="Shimizu F."/>
            <person name="Wakebe H."/>
            <person name="Hishigaki H."/>
            <person name="Watanabe T."/>
            <person name="Sugiyama A."/>
            <person name="Takemoto M."/>
            <person name="Kawakami B."/>
            <person name="Yamazaki M."/>
            <person name="Watanabe K."/>
            <person name="Kumagai A."/>
            <person name="Itakura S."/>
            <person name="Fukuzumi Y."/>
            <person name="Fujimori Y."/>
            <person name="Komiyama M."/>
            <person name="Tashiro H."/>
            <person name="Tanigami A."/>
            <person name="Fujiwara T."/>
            <person name="Ono T."/>
            <person name="Yamada K."/>
            <person name="Fujii Y."/>
            <person name="Ozaki K."/>
            <person name="Hirao M."/>
            <person name="Ohmori Y."/>
            <person name="Kawabata A."/>
            <person name="Hikiji T."/>
            <person name="Kobatake N."/>
            <person name="Inagaki H."/>
            <person name="Ikema Y."/>
            <person name="Okamoto S."/>
            <person name="Okitani R."/>
            <person name="Kawakami T."/>
            <person name="Noguchi S."/>
            <person name="Itoh T."/>
            <person name="Shigeta K."/>
            <person name="Senba T."/>
            <person name="Matsumura K."/>
            <person name="Nakajima Y."/>
            <person name="Mizuno T."/>
            <person name="Morinaga M."/>
            <person name="Sasaki M."/>
            <person name="Togashi T."/>
            <person name="Oyama M."/>
            <person name="Hata H."/>
            <person name="Watanabe M."/>
            <person name="Komatsu T."/>
            <person name="Mizushima-Sugano J."/>
            <person name="Satoh T."/>
            <person name="Shirai Y."/>
            <person name="Takahashi Y."/>
            <person name="Nakagawa K."/>
            <person name="Okumura K."/>
            <person name="Nagase T."/>
            <person name="Nomura N."/>
            <person name="Kikuchi H."/>
            <person name="Masuho Y."/>
            <person name="Yamashita R."/>
            <person name="Nakai K."/>
            <person name="Yada T."/>
            <person name="Nakamura Y."/>
            <person name="Ohara O."/>
            <person name="Isogai T."/>
            <person name="Sugano S."/>
        </authorList>
    </citation>
    <scope>NUCLEOTIDE SEQUENCE [LARGE SCALE MRNA] (ISOFORM 2)</scope>
    <source>
        <tissue>Spleen</tissue>
    </source>
</reference>
<reference key="4">
    <citation type="journal article" date="2006" name="Nature">
        <title>Analysis of the DNA sequence and duplication history of human chromosome 15.</title>
        <authorList>
            <person name="Zody M.C."/>
            <person name="Garber M."/>
            <person name="Sharpe T."/>
            <person name="Young S.K."/>
            <person name="Rowen L."/>
            <person name="O'Neill K."/>
            <person name="Whittaker C.A."/>
            <person name="Kamal M."/>
            <person name="Chang J.L."/>
            <person name="Cuomo C.A."/>
            <person name="Dewar K."/>
            <person name="FitzGerald M.G."/>
            <person name="Kodira C.D."/>
            <person name="Madan A."/>
            <person name="Qin S."/>
            <person name="Yang X."/>
            <person name="Abbasi N."/>
            <person name="Abouelleil A."/>
            <person name="Arachchi H.M."/>
            <person name="Baradarani L."/>
            <person name="Birditt B."/>
            <person name="Bloom S."/>
            <person name="Bloom T."/>
            <person name="Borowsky M.L."/>
            <person name="Burke J."/>
            <person name="Butler J."/>
            <person name="Cook A."/>
            <person name="DeArellano K."/>
            <person name="DeCaprio D."/>
            <person name="Dorris L. III"/>
            <person name="Dors M."/>
            <person name="Eichler E.E."/>
            <person name="Engels R."/>
            <person name="Fahey J."/>
            <person name="Fleetwood P."/>
            <person name="Friedman C."/>
            <person name="Gearin G."/>
            <person name="Hall J.L."/>
            <person name="Hensley G."/>
            <person name="Johnson E."/>
            <person name="Jones C."/>
            <person name="Kamat A."/>
            <person name="Kaur A."/>
            <person name="Locke D.P."/>
            <person name="Madan A."/>
            <person name="Munson G."/>
            <person name="Jaffe D.B."/>
            <person name="Lui A."/>
            <person name="Macdonald P."/>
            <person name="Mauceli E."/>
            <person name="Naylor J.W."/>
            <person name="Nesbitt R."/>
            <person name="Nicol R."/>
            <person name="O'Leary S.B."/>
            <person name="Ratcliffe A."/>
            <person name="Rounsley S."/>
            <person name="She X."/>
            <person name="Sneddon K.M.B."/>
            <person name="Stewart S."/>
            <person name="Sougnez C."/>
            <person name="Stone S.M."/>
            <person name="Topham K."/>
            <person name="Vincent D."/>
            <person name="Wang S."/>
            <person name="Zimmer A.R."/>
            <person name="Birren B.W."/>
            <person name="Hood L."/>
            <person name="Lander E.S."/>
            <person name="Nusbaum C."/>
        </authorList>
    </citation>
    <scope>NUCLEOTIDE SEQUENCE [LARGE SCALE GENOMIC DNA]</scope>
</reference>
<reference key="5">
    <citation type="submission" date="2005-07" db="EMBL/GenBank/DDBJ databases">
        <authorList>
            <person name="Mural R.J."/>
            <person name="Istrail S."/>
            <person name="Sutton G.G."/>
            <person name="Florea L."/>
            <person name="Halpern A.L."/>
            <person name="Mobarry C.M."/>
            <person name="Lippert R."/>
            <person name="Walenz B."/>
            <person name="Shatkay H."/>
            <person name="Dew I."/>
            <person name="Miller J.R."/>
            <person name="Flanigan M.J."/>
            <person name="Edwards N.J."/>
            <person name="Bolanos R."/>
            <person name="Fasulo D."/>
            <person name="Halldorsson B.V."/>
            <person name="Hannenhalli S."/>
            <person name="Turner R."/>
            <person name="Yooseph S."/>
            <person name="Lu F."/>
            <person name="Nusskern D.R."/>
            <person name="Shue B.C."/>
            <person name="Zheng X.H."/>
            <person name="Zhong F."/>
            <person name="Delcher A.L."/>
            <person name="Huson D.H."/>
            <person name="Kravitz S.A."/>
            <person name="Mouchard L."/>
            <person name="Reinert K."/>
            <person name="Remington K.A."/>
            <person name="Clark A.G."/>
            <person name="Waterman M.S."/>
            <person name="Eichler E.E."/>
            <person name="Adams M.D."/>
            <person name="Hunkapiller M.W."/>
            <person name="Myers E.W."/>
            <person name="Venter J.C."/>
        </authorList>
    </citation>
    <scope>NUCLEOTIDE SEQUENCE [LARGE SCALE GENOMIC DNA]</scope>
</reference>
<reference key="6">
    <citation type="journal article" date="2004" name="Genome Res.">
        <title>The status, quality, and expansion of the NIH full-length cDNA project: the Mammalian Gene Collection (MGC).</title>
        <authorList>
            <consortium name="The MGC Project Team"/>
        </authorList>
    </citation>
    <scope>NUCLEOTIDE SEQUENCE [LARGE SCALE MRNA] (ISOFORM 1)</scope>
    <source>
        <tissue>Eye</tissue>
        <tissue>Skin</tissue>
    </source>
</reference>
<reference key="7">
    <citation type="journal article" date="2007" name="Curr. Biol.">
        <title>Human USP3 is a chromatin modifier required for S phase progression and genome stability.</title>
        <authorList>
            <person name="Nicassio F."/>
            <person name="Corrado N."/>
            <person name="Vissers J.H."/>
            <person name="Areces L.B."/>
            <person name="Bergink S."/>
            <person name="Marteijn J.A."/>
            <person name="Geverts B."/>
            <person name="Houtsmuller A.B."/>
            <person name="Vermeulen W."/>
            <person name="Di Fiore P.P."/>
            <person name="Citterio E."/>
        </authorList>
    </citation>
    <scope>FUNCTION</scope>
    <scope>INTERACTION WITH H2A</scope>
    <scope>SUBCELLULAR LOCATION</scope>
    <scope>MUTAGENESIS OF HIS-56 AND CYS-168</scope>
    <scope>IDENTIFICATION BY MASS SPECTROMETRY</scope>
</reference>
<reference key="8">
    <citation type="journal article" date="2009" name="Anal. Chem.">
        <title>Lys-N and trypsin cover complementary parts of the phosphoproteome in a refined SCX-based approach.</title>
        <authorList>
            <person name="Gauci S."/>
            <person name="Helbig A.O."/>
            <person name="Slijper M."/>
            <person name="Krijgsveld J."/>
            <person name="Heck A.J."/>
            <person name="Mohammed S."/>
        </authorList>
    </citation>
    <scope>ACETYLATION [LARGE SCALE ANALYSIS] AT MET-1</scope>
    <scope>IDENTIFICATION BY MASS SPECTROMETRY [LARGE SCALE ANALYSIS]</scope>
</reference>
<reference key="9">
    <citation type="journal article" date="2014" name="Cell Cycle">
        <title>USP3 counteracts RNF168 via deubiquitinating H2A and gammaH2AX at lysine 13 and 15.</title>
        <authorList>
            <person name="Sharma N."/>
            <person name="Zhu Q."/>
            <person name="Wani G."/>
            <person name="He J."/>
            <person name="Wang Q.E."/>
            <person name="Wani A.A."/>
        </authorList>
    </citation>
    <scope>FUNCTION</scope>
    <scope>MUTAGENESIS OF CYS-168</scope>
    <scope>CATALYTIC ACTIVITY</scope>
    <scope>SUBCELLULAR LOCATION</scope>
</reference>
<reference key="10">
    <citation type="journal article" date="2014" name="Cell Res.">
        <title>USP3 inhibits type I interferon signaling by deubiquitinating RIG-I-like receptors.</title>
        <authorList>
            <person name="Cui J."/>
            <person name="Song Y."/>
            <person name="Li Y."/>
            <person name="Zhu Q."/>
            <person name="Tan P."/>
            <person name="Qin Y."/>
            <person name="Wang H.Y."/>
            <person name="Wang R.F."/>
        </authorList>
    </citation>
    <scope>FUNCTION</scope>
    <scope>CATALYTIC ACTIVITY</scope>
    <scope>MUTAGENESIS OF HIS-56 AND CYS-168</scope>
</reference>
<reference key="11">
    <citation type="journal article" date="2017" name="Biochem. Biophys. Res. Commun.">
        <title>USP3 stabilizes p53 protein through its deubiquitinase activity.</title>
        <authorList>
            <person name="Fu S."/>
            <person name="Shao S."/>
            <person name="Wang L."/>
            <person name="Liu H."/>
            <person name="Hou H."/>
            <person name="Wang Y."/>
            <person name="Wang H."/>
            <person name="Huang X."/>
            <person name="Lv R."/>
        </authorList>
    </citation>
    <scope>FUNCTION</scope>
    <scope>CATALYTIC ACTIVITY</scope>
    <scope>MUTAGENESIS OF CYS-168</scope>
</reference>
<reference key="12">
    <citation type="journal article" date="2022" name="Cell. Mol. Immunol.">
        <title>USP3 deubiquitinates and stabilizes the adapter protein ASC to regulate inflammasome activation.</title>
        <authorList>
            <person name="Zhuang W."/>
            <person name="Zhang L."/>
            <person name="Zheng Y."/>
            <person name="Liu B."/>
            <person name="Ma C."/>
            <person name="Zhao W."/>
            <person name="Liu S."/>
            <person name="Liu F."/>
            <person name="Gao C."/>
        </authorList>
    </citation>
    <scope>FUNCTION</scope>
</reference>
<reference key="13">
    <citation type="journal article" date="2023" name="EMBO Rep.">
        <title>USP3 plays a critical role in the induction of innate immune tolerance.</title>
        <authorList>
            <person name="Duan T."/>
            <person name="Feng Y."/>
            <person name="Du Y."/>
            <person name="Xing C."/>
            <person name="Chu J."/>
            <person name="Ou J."/>
            <person name="Liu X."/>
            <person name="Zhu M."/>
            <person name="Qian C."/>
            <person name="Yin B."/>
            <person name="Wang H.Y."/>
            <person name="Cui J."/>
            <person name="Wang R.F."/>
        </authorList>
    </citation>
    <scope>FUNCTION</scope>
    <scope>SUBCELLULAR LOCATION</scope>
    <scope>CATALYTIC ACTIVITY</scope>
    <scope>MUTAGENESIS OF CYS-168</scope>
</reference>
<dbReference type="EC" id="3.4.19.12" evidence="5 6 7 9"/>
<dbReference type="EMBL" id="AF073344">
    <property type="protein sequence ID" value="AAD42992.1"/>
    <property type="status" value="ALT_FRAME"/>
    <property type="molecule type" value="mRNA"/>
</dbReference>
<dbReference type="EMBL" id="BT007269">
    <property type="protein sequence ID" value="AAP35933.1"/>
    <property type="molecule type" value="mRNA"/>
</dbReference>
<dbReference type="EMBL" id="AK301236">
    <property type="protein sequence ID" value="BAG62807.1"/>
    <property type="molecule type" value="mRNA"/>
</dbReference>
<dbReference type="EMBL" id="AC007950">
    <property type="status" value="NOT_ANNOTATED_CDS"/>
    <property type="molecule type" value="Genomic_DNA"/>
</dbReference>
<dbReference type="EMBL" id="AC118274">
    <property type="status" value="NOT_ANNOTATED_CDS"/>
    <property type="molecule type" value="Genomic_DNA"/>
</dbReference>
<dbReference type="EMBL" id="CH471082">
    <property type="protein sequence ID" value="EAW77651.1"/>
    <property type="molecule type" value="Genomic_DNA"/>
</dbReference>
<dbReference type="EMBL" id="BC018113">
    <property type="protein sequence ID" value="AAH18113.1"/>
    <property type="molecule type" value="mRNA"/>
</dbReference>
<dbReference type="EMBL" id="BC065300">
    <property type="protein sequence ID" value="AAH65300.1"/>
    <property type="molecule type" value="mRNA"/>
</dbReference>
<dbReference type="EMBL" id="BC107137">
    <property type="protein sequence ID" value="AAI07138.1"/>
    <property type="molecule type" value="mRNA"/>
</dbReference>
<dbReference type="EMBL" id="BC107138">
    <property type="protein sequence ID" value="AAI07139.1"/>
    <property type="molecule type" value="mRNA"/>
</dbReference>
<dbReference type="CCDS" id="CCDS32265.1">
    <molecule id="Q9Y6I4-1"/>
</dbReference>
<dbReference type="CCDS" id="CCDS58370.1">
    <molecule id="Q9Y6I4-2"/>
</dbReference>
<dbReference type="RefSeq" id="NP_001243631.1">
    <molecule id="Q9Y6I4-2"/>
    <property type="nucleotide sequence ID" value="NM_001256702.2"/>
</dbReference>
<dbReference type="RefSeq" id="NP_006528.2">
    <molecule id="Q9Y6I4-1"/>
    <property type="nucleotide sequence ID" value="NM_006537.4"/>
</dbReference>
<dbReference type="SMR" id="Q9Y6I4"/>
<dbReference type="BioGRID" id="115285">
    <property type="interactions" value="69"/>
</dbReference>
<dbReference type="DIP" id="DIP-53585N"/>
<dbReference type="FunCoup" id="Q9Y6I4">
    <property type="interactions" value="3426"/>
</dbReference>
<dbReference type="IntAct" id="Q9Y6I4">
    <property type="interactions" value="29"/>
</dbReference>
<dbReference type="MINT" id="Q9Y6I4"/>
<dbReference type="STRING" id="9606.ENSP00000369681"/>
<dbReference type="BindingDB" id="Q9Y6I4"/>
<dbReference type="ChEMBL" id="CHEMBL5291515"/>
<dbReference type="MEROPS" id="C19.026"/>
<dbReference type="iPTMnet" id="Q9Y6I4"/>
<dbReference type="PhosphoSitePlus" id="Q9Y6I4"/>
<dbReference type="SwissPalm" id="Q9Y6I4"/>
<dbReference type="BioMuta" id="USP3"/>
<dbReference type="DMDM" id="205371844"/>
<dbReference type="jPOST" id="Q9Y6I4"/>
<dbReference type="MassIVE" id="Q9Y6I4"/>
<dbReference type="PaxDb" id="9606-ENSP00000369681"/>
<dbReference type="PeptideAtlas" id="Q9Y6I4"/>
<dbReference type="ProteomicsDB" id="25594"/>
<dbReference type="ProteomicsDB" id="86692">
    <molecule id="Q9Y6I4-1"/>
</dbReference>
<dbReference type="Pumba" id="Q9Y6I4"/>
<dbReference type="Antibodypedia" id="13304">
    <property type="antibodies" value="307 antibodies from 33 providers"/>
</dbReference>
<dbReference type="DNASU" id="9960"/>
<dbReference type="Ensembl" id="ENST00000380324.8">
    <molecule id="Q9Y6I4-1"/>
    <property type="protein sequence ID" value="ENSP00000369681.3"/>
    <property type="gene ID" value="ENSG00000140455.17"/>
</dbReference>
<dbReference type="Ensembl" id="ENST00000540797.5">
    <molecule id="Q9Y6I4-2"/>
    <property type="protein sequence ID" value="ENSP00000445828.1"/>
    <property type="gene ID" value="ENSG00000140455.17"/>
</dbReference>
<dbReference type="GeneID" id="9960"/>
<dbReference type="KEGG" id="hsa:9960"/>
<dbReference type="MANE-Select" id="ENST00000380324.8">
    <property type="protein sequence ID" value="ENSP00000369681.3"/>
    <property type="RefSeq nucleotide sequence ID" value="NM_006537.4"/>
    <property type="RefSeq protein sequence ID" value="NP_006528.2"/>
</dbReference>
<dbReference type="UCSC" id="uc002amf.5">
    <molecule id="Q9Y6I4-1"/>
    <property type="organism name" value="human"/>
</dbReference>
<dbReference type="AGR" id="HGNC:12626"/>
<dbReference type="CTD" id="9960"/>
<dbReference type="DisGeNET" id="9960"/>
<dbReference type="GeneCards" id="USP3"/>
<dbReference type="HGNC" id="HGNC:12626">
    <property type="gene designation" value="USP3"/>
</dbReference>
<dbReference type="HPA" id="ENSG00000140455">
    <property type="expression patterns" value="Low tissue specificity"/>
</dbReference>
<dbReference type="MIM" id="604728">
    <property type="type" value="gene"/>
</dbReference>
<dbReference type="neXtProt" id="NX_Q9Y6I4"/>
<dbReference type="OpenTargets" id="ENSG00000140455"/>
<dbReference type="PharmGKB" id="PA37251"/>
<dbReference type="VEuPathDB" id="HostDB:ENSG00000140455"/>
<dbReference type="eggNOG" id="KOG1867">
    <property type="taxonomic scope" value="Eukaryota"/>
</dbReference>
<dbReference type="GeneTree" id="ENSGT00940000157850"/>
<dbReference type="InParanoid" id="Q9Y6I4"/>
<dbReference type="OMA" id="KYWVKYL"/>
<dbReference type="OrthoDB" id="21192at2759"/>
<dbReference type="PAN-GO" id="Q9Y6I4">
    <property type="GO annotations" value="3 GO annotations based on evolutionary models"/>
</dbReference>
<dbReference type="PhylomeDB" id="Q9Y6I4"/>
<dbReference type="TreeFam" id="TF315281"/>
<dbReference type="PathwayCommons" id="Q9Y6I4"/>
<dbReference type="Reactome" id="R-HSA-5689880">
    <property type="pathway name" value="Ub-specific processing proteases"/>
</dbReference>
<dbReference type="SignaLink" id="Q9Y6I4"/>
<dbReference type="BioGRID-ORCS" id="9960">
    <property type="hits" value="17 hits in 1165 CRISPR screens"/>
</dbReference>
<dbReference type="ChiTaRS" id="USP3">
    <property type="organism name" value="human"/>
</dbReference>
<dbReference type="GenomeRNAi" id="9960"/>
<dbReference type="Pharos" id="Q9Y6I4">
    <property type="development level" value="Tbio"/>
</dbReference>
<dbReference type="PRO" id="PR:Q9Y6I4"/>
<dbReference type="Proteomes" id="UP000005640">
    <property type="component" value="Chromosome 15"/>
</dbReference>
<dbReference type="RNAct" id="Q9Y6I4">
    <property type="molecule type" value="protein"/>
</dbReference>
<dbReference type="Bgee" id="ENSG00000140455">
    <property type="expression patterns" value="Expressed in monocyte and 198 other cell types or tissues"/>
</dbReference>
<dbReference type="ExpressionAtlas" id="Q9Y6I4">
    <property type="expression patterns" value="baseline and differential"/>
</dbReference>
<dbReference type="GO" id="GO:0000785">
    <property type="term" value="C:chromatin"/>
    <property type="evidence" value="ECO:0000314"/>
    <property type="project" value="UniProtKB"/>
</dbReference>
<dbReference type="GO" id="GO:0005737">
    <property type="term" value="C:cytoplasm"/>
    <property type="evidence" value="ECO:0000318"/>
    <property type="project" value="GO_Central"/>
</dbReference>
<dbReference type="GO" id="GO:0036464">
    <property type="term" value="C:cytoplasmic ribonucleoprotein granule"/>
    <property type="evidence" value="ECO:0000314"/>
    <property type="project" value="HPA"/>
</dbReference>
<dbReference type="GO" id="GO:0090543">
    <property type="term" value="C:Flemming body"/>
    <property type="evidence" value="ECO:0000314"/>
    <property type="project" value="HPA"/>
</dbReference>
<dbReference type="GO" id="GO:0005654">
    <property type="term" value="C:nucleoplasm"/>
    <property type="evidence" value="ECO:0000314"/>
    <property type="project" value="HPA"/>
</dbReference>
<dbReference type="GO" id="GO:0005634">
    <property type="term" value="C:nucleus"/>
    <property type="evidence" value="ECO:0000318"/>
    <property type="project" value="GO_Central"/>
</dbReference>
<dbReference type="GO" id="GO:0004843">
    <property type="term" value="F:cysteine-type deubiquitinase activity"/>
    <property type="evidence" value="ECO:0000315"/>
    <property type="project" value="UniProtKB"/>
</dbReference>
<dbReference type="GO" id="GO:0042393">
    <property type="term" value="F:histone binding"/>
    <property type="evidence" value="ECO:0000353"/>
    <property type="project" value="UniProtKB"/>
</dbReference>
<dbReference type="GO" id="GO:0140950">
    <property type="term" value="F:histone H2A deubiquitinase activity"/>
    <property type="evidence" value="ECO:0000315"/>
    <property type="project" value="UniProtKB"/>
</dbReference>
<dbReference type="GO" id="GO:0140936">
    <property type="term" value="F:histone H2B deubiquitinase activity"/>
    <property type="evidence" value="ECO:0000315"/>
    <property type="project" value="UniProtKB"/>
</dbReference>
<dbReference type="GO" id="GO:0008270">
    <property type="term" value="F:zinc ion binding"/>
    <property type="evidence" value="ECO:0007669"/>
    <property type="project" value="UniProtKB-KW"/>
</dbReference>
<dbReference type="GO" id="GO:0006281">
    <property type="term" value="P:DNA repair"/>
    <property type="evidence" value="ECO:0000315"/>
    <property type="project" value="UniProtKB"/>
</dbReference>
<dbReference type="GO" id="GO:0140861">
    <property type="term" value="P:DNA repair-dependent chromatin remodeling"/>
    <property type="evidence" value="ECO:0000314"/>
    <property type="project" value="UniProtKB"/>
</dbReference>
<dbReference type="GO" id="GO:0016579">
    <property type="term" value="P:protein deubiquitination"/>
    <property type="evidence" value="ECO:0007669"/>
    <property type="project" value="InterPro"/>
</dbReference>
<dbReference type="GO" id="GO:0006508">
    <property type="term" value="P:proteolysis"/>
    <property type="evidence" value="ECO:0007669"/>
    <property type="project" value="UniProtKB-KW"/>
</dbReference>
<dbReference type="FunFam" id="3.30.40.10:FF:000234">
    <property type="entry name" value="Ubiquitinyl hydrolase 1"/>
    <property type="match status" value="1"/>
</dbReference>
<dbReference type="FunFam" id="3.90.70.10:FF:000019">
    <property type="entry name" value="Ubiquitinyl hydrolase 1"/>
    <property type="match status" value="1"/>
</dbReference>
<dbReference type="Gene3D" id="3.90.70.10">
    <property type="entry name" value="Cysteine proteinases"/>
    <property type="match status" value="1"/>
</dbReference>
<dbReference type="Gene3D" id="3.30.40.10">
    <property type="entry name" value="Zinc/RING finger domain, C3HC4 (zinc finger)"/>
    <property type="match status" value="1"/>
</dbReference>
<dbReference type="InterPro" id="IPR038765">
    <property type="entry name" value="Papain-like_cys_pep_sf"/>
</dbReference>
<dbReference type="InterPro" id="IPR001394">
    <property type="entry name" value="Peptidase_C19_UCH"/>
</dbReference>
<dbReference type="InterPro" id="IPR050185">
    <property type="entry name" value="Ub_carboxyl-term_hydrolase"/>
</dbReference>
<dbReference type="InterPro" id="IPR018200">
    <property type="entry name" value="USP_CS"/>
</dbReference>
<dbReference type="InterPro" id="IPR028889">
    <property type="entry name" value="USP_dom"/>
</dbReference>
<dbReference type="InterPro" id="IPR013083">
    <property type="entry name" value="Znf_RING/FYVE/PHD"/>
</dbReference>
<dbReference type="InterPro" id="IPR001607">
    <property type="entry name" value="Znf_UBP"/>
</dbReference>
<dbReference type="PANTHER" id="PTHR21646">
    <property type="entry name" value="UBIQUITIN CARBOXYL-TERMINAL HYDROLASE"/>
    <property type="match status" value="1"/>
</dbReference>
<dbReference type="PANTHER" id="PTHR21646:SF19">
    <property type="entry name" value="UBIQUITIN CARBOXYL-TERMINAL HYDROLASE 3"/>
    <property type="match status" value="1"/>
</dbReference>
<dbReference type="Pfam" id="PF00443">
    <property type="entry name" value="UCH"/>
    <property type="match status" value="1"/>
</dbReference>
<dbReference type="Pfam" id="PF02148">
    <property type="entry name" value="zf-UBP"/>
    <property type="match status" value="1"/>
</dbReference>
<dbReference type="SMART" id="SM00290">
    <property type="entry name" value="ZnF_UBP"/>
    <property type="match status" value="1"/>
</dbReference>
<dbReference type="SUPFAM" id="SSF54001">
    <property type="entry name" value="Cysteine proteinases"/>
    <property type="match status" value="1"/>
</dbReference>
<dbReference type="SUPFAM" id="SSF57850">
    <property type="entry name" value="RING/U-box"/>
    <property type="match status" value="1"/>
</dbReference>
<dbReference type="PROSITE" id="PS00972">
    <property type="entry name" value="USP_1"/>
    <property type="match status" value="1"/>
</dbReference>
<dbReference type="PROSITE" id="PS00973">
    <property type="entry name" value="USP_2"/>
    <property type="match status" value="1"/>
</dbReference>
<dbReference type="PROSITE" id="PS50235">
    <property type="entry name" value="USP_3"/>
    <property type="match status" value="1"/>
</dbReference>
<dbReference type="PROSITE" id="PS50271">
    <property type="entry name" value="ZF_UBP"/>
    <property type="match status" value="1"/>
</dbReference>
<feature type="chain" id="PRO_0000080619" description="Ubiquitin carboxyl-terminal hydrolase 3">
    <location>
        <begin position="1"/>
        <end position="520"/>
    </location>
</feature>
<feature type="domain" description="USP">
    <location>
        <begin position="159"/>
        <end position="511"/>
    </location>
</feature>
<feature type="zinc finger region" description="UBP-type" evidence="1">
    <location>
        <begin position="1"/>
        <end position="121"/>
    </location>
</feature>
<feature type="active site" description="Nucleophile" evidence="2 3">
    <location>
        <position position="168"/>
    </location>
</feature>
<feature type="active site" description="Proton acceptor" evidence="2 3">
    <location>
        <position position="471"/>
    </location>
</feature>
<feature type="binding site" evidence="1">
    <location>
        <position position="3"/>
    </location>
    <ligand>
        <name>Zn(2+)</name>
        <dbReference type="ChEBI" id="CHEBI:29105"/>
        <label>1</label>
    </ligand>
</feature>
<feature type="binding site" evidence="1">
    <location>
        <position position="5"/>
    </location>
    <ligand>
        <name>Zn(2+)</name>
        <dbReference type="ChEBI" id="CHEBI:29105"/>
        <label>1</label>
    </ligand>
</feature>
<feature type="binding site" evidence="1">
    <location>
        <position position="29"/>
    </location>
    <ligand>
        <name>Zn(2+)</name>
        <dbReference type="ChEBI" id="CHEBI:29105"/>
        <label>2</label>
    </ligand>
</feature>
<feature type="binding site" evidence="1">
    <location>
        <position position="32"/>
    </location>
    <ligand>
        <name>Zn(2+)</name>
        <dbReference type="ChEBI" id="CHEBI:29105"/>
        <label>2</label>
    </ligand>
</feature>
<feature type="binding site" evidence="1">
    <location>
        <position position="41"/>
    </location>
    <ligand>
        <name>Zn(2+)</name>
        <dbReference type="ChEBI" id="CHEBI:29105"/>
        <label>3</label>
    </ligand>
</feature>
<feature type="binding site" evidence="1">
    <location>
        <position position="44"/>
    </location>
    <ligand>
        <name>Zn(2+)</name>
        <dbReference type="ChEBI" id="CHEBI:29105"/>
        <label>3</label>
    </ligand>
</feature>
<feature type="binding site" evidence="1">
    <location>
        <position position="49"/>
    </location>
    <ligand>
        <name>Zn(2+)</name>
        <dbReference type="ChEBI" id="CHEBI:29105"/>
        <label>2</label>
    </ligand>
</feature>
<feature type="binding site" evidence="1">
    <location>
        <position position="56"/>
    </location>
    <ligand>
        <name>Zn(2+)</name>
        <dbReference type="ChEBI" id="CHEBI:29105"/>
        <label>2</label>
    </ligand>
</feature>
<feature type="binding site" evidence="1">
    <location>
        <position position="60"/>
    </location>
    <ligand>
        <name>Zn(2+)</name>
        <dbReference type="ChEBI" id="CHEBI:29105"/>
        <label>3</label>
    </ligand>
</feature>
<feature type="binding site" evidence="1">
    <location>
        <position position="82"/>
    </location>
    <ligand>
        <name>Zn(2+)</name>
        <dbReference type="ChEBI" id="CHEBI:29105"/>
        <label>3</label>
    </ligand>
</feature>
<feature type="binding site" evidence="1">
    <location>
        <position position="95"/>
    </location>
    <ligand>
        <name>Zn(2+)</name>
        <dbReference type="ChEBI" id="CHEBI:29105"/>
        <label>1</label>
    </ligand>
</feature>
<feature type="binding site" evidence="1">
    <location>
        <position position="98"/>
    </location>
    <ligand>
        <name>Zn(2+)</name>
        <dbReference type="ChEBI" id="CHEBI:29105"/>
        <label>1</label>
    </ligand>
</feature>
<feature type="modified residue" description="N-acetylmethionine" evidence="12">
    <location>
        <position position="1"/>
    </location>
</feature>
<feature type="splice variant" id="VSP_044712" description="In isoform 2." evidence="10">
    <original>RYVNGHAKKHYEDAQVPLTNHKKSEKQDKVQHTVCMDCSSYSTYC</original>
    <variation>S</variation>
    <location>
        <begin position="51"/>
        <end position="95"/>
    </location>
</feature>
<feature type="sequence variant" id="VAR_051521" description="In dbSNP:rs34776764.">
    <original>P</original>
    <variation>T</variation>
    <location>
        <position position="360"/>
    </location>
</feature>
<feature type="mutagenesis site" description="Complete loss of deubiquitinase activity." evidence="4 6">
    <original>H</original>
    <variation>A</variation>
    <location>
        <position position="56"/>
    </location>
</feature>
<feature type="mutagenesis site" description="Complete loss of deubiquitinase activity." evidence="4 5 6 9">
    <original>C</original>
    <variation>S</variation>
    <location>
        <position position="168"/>
    </location>
</feature>
<feature type="sequence conflict" description="In Ref. 1; AAD42992." evidence="11" ref="1">
    <original>C</original>
    <variation>W</variation>
    <location>
        <position position="439"/>
    </location>
</feature>
<feature type="sequence conflict" description="In Ref. 3; BAG62807." evidence="11" ref="3">
    <original>T</original>
    <variation>I</variation>
    <location>
        <position position="473"/>
    </location>
</feature>
<keyword id="KW-0007">Acetylation</keyword>
<keyword id="KW-0025">Alternative splicing</keyword>
<keyword id="KW-0131">Cell cycle</keyword>
<keyword id="KW-0156">Chromatin regulator</keyword>
<keyword id="KW-0963">Cytoplasm</keyword>
<keyword id="KW-0227">DNA damage</keyword>
<keyword id="KW-0378">Hydrolase</keyword>
<keyword id="KW-0479">Metal-binding</keyword>
<keyword id="KW-0539">Nucleus</keyword>
<keyword id="KW-0645">Protease</keyword>
<keyword id="KW-1267">Proteomics identification</keyword>
<keyword id="KW-1185">Reference proteome</keyword>
<keyword id="KW-0788">Thiol protease</keyword>
<keyword id="KW-0833">Ubl conjugation pathway</keyword>
<keyword id="KW-0862">Zinc</keyword>
<keyword id="KW-0863">Zinc-finger</keyword>
<protein>
    <recommendedName>
        <fullName>Ubiquitin carboxyl-terminal hydrolase 3</fullName>
        <ecNumber evidence="5 6 7 9">3.4.19.12</ecNumber>
    </recommendedName>
    <alternativeName>
        <fullName>Deubiquitinating enzyme 3</fullName>
    </alternativeName>
    <alternativeName>
        <fullName>Ubiquitin thioesterase 3</fullName>
    </alternativeName>
    <alternativeName>
        <fullName>Ubiquitin-specific-processing protease 3</fullName>
    </alternativeName>
</protein>
<gene>
    <name type="primary">USP3</name>
</gene>
<sequence length="520" mass="58897">MECPHLSSSVCIAPDSAKFPNGSPSSWCCSVCRSNKSPWVCLTCSSVHCGRYVNGHAKKHYEDAQVPLTNHKKSEKQDKVQHTVCMDCSSYSTYCYRCDDFVVNDTKLGLVQKVREHLQNLENSAFTADRHKKRKLLENSTLNSKLLKVNGSTTAICATGLRNLGNTCFMNAILQSLSNIEQFCCYFKELPAVELRNGKTAGRRTYHTRSQGDNNVSLVEEFRKTLCALWQGSQTAFSPESLFYVVWKIMPNFRGYQQQDAHEFMRYLLDHLHLELQGGFNGVSRSAILQENSTLSASNKCCINGASTVVTAIFGGILQNEVNCLICGTESRKFDPFLDLSLDIPSQFRSKRSKNQENGPVCSLRDCLRSFTDLEELDETELYMCHKCKKKQKSTKKFWIQKLPKVLCLHLKRFHWTAYLRNKVDTYVEFPLRGLDMKCYLLEPENSGPESCLYDLAAVVVHHGSGVGSGHYTAYATHEGRWFHFNDSTVTLTDEETVVKAKAYILFYVEHQAKAGSDKL</sequence>
<accession>Q9Y6I4</accession>
<accession>B4DVU5</accession>
<accession>F5H1A6</accession>
<accession>Q8WVD0</accession>
<evidence type="ECO:0000255" key="1">
    <source>
        <dbReference type="PROSITE-ProRule" id="PRU00502"/>
    </source>
</evidence>
<evidence type="ECO:0000255" key="2">
    <source>
        <dbReference type="PROSITE-ProRule" id="PRU10092"/>
    </source>
</evidence>
<evidence type="ECO:0000255" key="3">
    <source>
        <dbReference type="PROSITE-ProRule" id="PRU10093"/>
    </source>
</evidence>
<evidence type="ECO:0000269" key="4">
    <source>
    </source>
</evidence>
<evidence type="ECO:0000269" key="5">
    <source>
    </source>
</evidence>
<evidence type="ECO:0000269" key="6">
    <source>
    </source>
</evidence>
<evidence type="ECO:0000269" key="7">
    <source>
    </source>
</evidence>
<evidence type="ECO:0000269" key="8">
    <source>
    </source>
</evidence>
<evidence type="ECO:0000269" key="9">
    <source>
    </source>
</evidence>
<evidence type="ECO:0000303" key="10">
    <source>
    </source>
</evidence>
<evidence type="ECO:0000305" key="11"/>
<evidence type="ECO:0007744" key="12">
    <source>
    </source>
</evidence>
<name>UBP3_HUMAN</name>
<proteinExistence type="evidence at protein level"/>